<accession>P0DXC7</accession>
<keyword id="KW-0520">NAD</keyword>
<keyword id="KW-0560">Oxidoreductase</keyword>
<evidence type="ECO:0000250" key="1">
    <source>
        <dbReference type="UniProtKB" id="O57693"/>
    </source>
</evidence>
<evidence type="ECO:0000269" key="2">
    <source>
    </source>
</evidence>
<evidence type="ECO:0000303" key="3">
    <source>
    </source>
</evidence>
<evidence type="ECO:0000305" key="4"/>
<evidence type="ECO:0000305" key="5">
    <source>
    </source>
</evidence>
<evidence type="ECO:0000312" key="6">
    <source>
        <dbReference type="EMBL" id="MBJ2347000.1"/>
    </source>
</evidence>
<organism>
    <name type="scientific">Pseudomonas canavaninivorans</name>
    <dbReference type="NCBI Taxonomy" id="2842348"/>
    <lineage>
        <taxon>Bacteria</taxon>
        <taxon>Pseudomonadati</taxon>
        <taxon>Pseudomonadota</taxon>
        <taxon>Gammaproteobacteria</taxon>
        <taxon>Pseudomonadales</taxon>
        <taxon>Pseudomonadaceae</taxon>
        <taxon>Pseudomonas</taxon>
    </lineage>
</organism>
<feature type="chain" id="PRO_0000460364" description="Aspartate-semialdehyde dehydrogenase 1">
    <location>
        <begin position="1"/>
        <end position="470"/>
    </location>
</feature>
<feature type="active site" evidence="1">
    <location>
        <position position="243"/>
    </location>
</feature>
<feature type="active site" evidence="1">
    <location>
        <position position="277"/>
    </location>
</feature>
<feature type="binding site" evidence="1">
    <location>
        <position position="145"/>
    </location>
    <ligand>
        <name>NAD(+)</name>
        <dbReference type="ChEBI" id="CHEBI:57540"/>
    </ligand>
</feature>
<feature type="binding site" evidence="1">
    <location>
        <position position="171"/>
    </location>
    <ligand>
        <name>NAD(+)</name>
        <dbReference type="ChEBI" id="CHEBI:57540"/>
    </ligand>
</feature>
<feature type="binding site" evidence="1">
    <location>
        <position position="245"/>
    </location>
    <ligand>
        <name>NAD(+)</name>
        <dbReference type="ChEBI" id="CHEBI:57540"/>
    </ligand>
</feature>
<feature type="binding site" evidence="1">
    <location>
        <position position="371"/>
    </location>
    <ligand>
        <name>NAD(+)</name>
        <dbReference type="ChEBI" id="CHEBI:57540"/>
    </ligand>
</feature>
<reference key="1">
    <citation type="journal article" date="2022" name="RSC Chem. Biol.">
        <title>Canavanine utilization via homoserine and hydroxyguanidine by a PLP-dependent gamma-lyase in Pseudomonadaceae and Rhizobiales.</title>
        <authorList>
            <person name="Hauth F."/>
            <person name="Buck H."/>
            <person name="Stanoppi M."/>
            <person name="Hartig J.S."/>
        </authorList>
    </citation>
    <scope>NUCLEOTIDE SEQUENCE [LARGE SCALE GENOMIC DNA]</scope>
    <scope>FUNCTION</scope>
    <scope>INDUCTION</scope>
    <source>
        <strain>DSM 112525 / LMG 32336 / HB002</strain>
    </source>
</reference>
<comment type="function">
    <text evidence="2">Dehydrogenase involved in the degradation of canavanine, the delta-oxa-analog of arginine, allowing growth on canavanine as sole nitrogen and carbon source (PubMed:36320885). Probably catalyzes the NAD(+)-dependent oxidation of L-aspartate-semialdehyde to L-aspartate (PubMed:36320885).</text>
</comment>
<comment type="catalytic activity">
    <reaction evidence="5">
        <text>L-aspartate 4-semialdehyde + NAD(+) + H2O = L-aspartate + NADH + 2 H(+)</text>
        <dbReference type="Rhea" id="RHEA:45764"/>
        <dbReference type="ChEBI" id="CHEBI:15377"/>
        <dbReference type="ChEBI" id="CHEBI:15378"/>
        <dbReference type="ChEBI" id="CHEBI:29991"/>
        <dbReference type="ChEBI" id="CHEBI:57540"/>
        <dbReference type="ChEBI" id="CHEBI:57945"/>
        <dbReference type="ChEBI" id="CHEBI:537519"/>
    </reaction>
    <physiologicalReaction direction="left-to-right" evidence="5">
        <dbReference type="Rhea" id="RHEA:45765"/>
    </physiologicalReaction>
</comment>
<comment type="induction">
    <text evidence="2">Up-regulated upon growth on canavanine.</text>
</comment>
<comment type="similarity">
    <text evidence="4">Belongs to the aldehyde dehydrogenase family.</text>
</comment>
<name>ASDH1_PSECO</name>
<sequence>MNVSRLALAVVEPHIEVLNPFDGSIVGTVADVCASEVPHLLETGRSGARACAALPRHRRASILEQAALNIERDAKAFARLIVDEAGKTLKQAEKEVKRCVNTLKLSAEEAKRNAGEIVPFDAYEGAESRQGWFTREPLGLIVAITPYNDPLNLVAHKLGPAIAGGNAVILKPSELAPLSALKLVSYLVAAGLPETVVTVATGGAELGKALVAARDVRMISFTGGFVTGEQIARTAGLKKLAMDLGGNAPVIVMGDCNLDAAVDSCVSGAFWAAGQNCIGTQRLLIHAPIYEAFRERFVNQAQALVVGNPLLANTDIGPMITQQAAQNAEQMVNEALQQGATLLCGHRRQGNCYGATVLENVDHSSRIWRNEAFAPVVVLQVFETFDEAIALANEPEYALHAGIFTNDLSTAMSAARRIEAGGVMINDSSDFRFDAMPFGGSKYGSLGREGVRFAYEEMTQPKVVCLNVLG</sequence>
<proteinExistence type="evidence at transcript level"/>
<gene>
    <name evidence="6" type="ORF">JFQ02_09245</name>
</gene>
<protein>
    <recommendedName>
        <fullName evidence="4">Aspartate-semialdehyde dehydrogenase 1</fullName>
        <ecNumber evidence="5">1.2.1.-</ecNumber>
    </recommendedName>
    <alternativeName>
        <fullName evidence="3">Aldehyde dehydrogenase 1</fullName>
    </alternativeName>
</protein>
<dbReference type="EC" id="1.2.1.-" evidence="5"/>
<dbReference type="EMBL" id="JAEKIK010000007">
    <property type="protein sequence ID" value="MBJ2347000.1"/>
    <property type="molecule type" value="Genomic_DNA"/>
</dbReference>
<dbReference type="SMR" id="P0DXC7"/>
<dbReference type="GO" id="GO:0008911">
    <property type="term" value="F:lactaldehyde dehydrogenase (NAD+) activity"/>
    <property type="evidence" value="ECO:0007669"/>
    <property type="project" value="TreeGrafter"/>
</dbReference>
<dbReference type="CDD" id="cd07149">
    <property type="entry name" value="ALDH_y4uC"/>
    <property type="match status" value="1"/>
</dbReference>
<dbReference type="Gene3D" id="3.40.605.10">
    <property type="entry name" value="Aldehyde Dehydrogenase, Chain A, domain 1"/>
    <property type="match status" value="1"/>
</dbReference>
<dbReference type="Gene3D" id="3.40.309.10">
    <property type="entry name" value="Aldehyde Dehydrogenase, Chain A, domain 2"/>
    <property type="match status" value="1"/>
</dbReference>
<dbReference type="InterPro" id="IPR016161">
    <property type="entry name" value="Ald_DH/histidinol_DH"/>
</dbReference>
<dbReference type="InterPro" id="IPR016163">
    <property type="entry name" value="Ald_DH_C"/>
</dbReference>
<dbReference type="InterPro" id="IPR016162">
    <property type="entry name" value="Ald_DH_N"/>
</dbReference>
<dbReference type="InterPro" id="IPR015590">
    <property type="entry name" value="Aldehyde_DH_dom"/>
</dbReference>
<dbReference type="InterPro" id="IPR051020">
    <property type="entry name" value="ALDH-related_metabolic_enz"/>
</dbReference>
<dbReference type="PANTHER" id="PTHR42991">
    <property type="entry name" value="ALDEHYDE DEHYDROGENASE"/>
    <property type="match status" value="1"/>
</dbReference>
<dbReference type="PANTHER" id="PTHR42991:SF1">
    <property type="entry name" value="ALDEHYDE DEHYDROGENASE"/>
    <property type="match status" value="1"/>
</dbReference>
<dbReference type="Pfam" id="PF00171">
    <property type="entry name" value="Aldedh"/>
    <property type="match status" value="1"/>
</dbReference>
<dbReference type="SUPFAM" id="SSF53720">
    <property type="entry name" value="ALDH-like"/>
    <property type="match status" value="1"/>
</dbReference>